<proteinExistence type="evidence at protein level"/>
<sequence length="333" mass="37000">MLGWIKRLIRMVFQQVGVSMQSVLWSRKPYGSSRSIVRKIGTNLSLIQCPRVQFQINSHATEWSPSHPGEDAVASFADVGWVAKEEGECSARLRTEVRSRPPLQDDLLFFEKAPSRQISLPDLSQEEPQLKTPALANEEALQKICALENELAALRAQIAKIVTQQEQQNLTAGDLDSTTFGTIPPHPPPPPPPLPPPALGLHQSTSAVDLIKERREKRANAGKTLVKNNPKKPEMPNMLEILKEMNSVKLRSVKRSEQDVKPKPVDATDPAALIAEALKKKFAYRYRSDSQDEVEKGIPKSESEATSERVLFGPHMLKPTGKMKALIENVSDS</sequence>
<organism>
    <name type="scientific">Homo sapiens</name>
    <name type="common">Human</name>
    <dbReference type="NCBI Taxonomy" id="9606"/>
    <lineage>
        <taxon>Eukaryota</taxon>
        <taxon>Metazoa</taxon>
        <taxon>Chordata</taxon>
        <taxon>Craniata</taxon>
        <taxon>Vertebrata</taxon>
        <taxon>Euteleostomi</taxon>
        <taxon>Mammalia</taxon>
        <taxon>Eutheria</taxon>
        <taxon>Euarchontoglires</taxon>
        <taxon>Primates</taxon>
        <taxon>Haplorrhini</taxon>
        <taxon>Catarrhini</taxon>
        <taxon>Hominidae</taxon>
        <taxon>Homo</taxon>
    </lineage>
</organism>
<reference key="1">
    <citation type="journal article" date="2006" name="Nature">
        <title>DNA sequence and analysis of human chromosome 8.</title>
        <authorList>
            <person name="Nusbaum C."/>
            <person name="Mikkelsen T.S."/>
            <person name="Zody M.C."/>
            <person name="Asakawa S."/>
            <person name="Taudien S."/>
            <person name="Garber M."/>
            <person name="Kodira C.D."/>
            <person name="Schueler M.G."/>
            <person name="Shimizu A."/>
            <person name="Whittaker C.A."/>
            <person name="Chang J.L."/>
            <person name="Cuomo C.A."/>
            <person name="Dewar K."/>
            <person name="FitzGerald M.G."/>
            <person name="Yang X."/>
            <person name="Allen N.R."/>
            <person name="Anderson S."/>
            <person name="Asakawa T."/>
            <person name="Blechschmidt K."/>
            <person name="Bloom T."/>
            <person name="Borowsky M.L."/>
            <person name="Butler J."/>
            <person name="Cook A."/>
            <person name="Corum B."/>
            <person name="DeArellano K."/>
            <person name="DeCaprio D."/>
            <person name="Dooley K.T."/>
            <person name="Dorris L. III"/>
            <person name="Engels R."/>
            <person name="Gloeckner G."/>
            <person name="Hafez N."/>
            <person name="Hagopian D.S."/>
            <person name="Hall J.L."/>
            <person name="Ishikawa S.K."/>
            <person name="Jaffe D.B."/>
            <person name="Kamat A."/>
            <person name="Kudoh J."/>
            <person name="Lehmann R."/>
            <person name="Lokitsang T."/>
            <person name="Macdonald P."/>
            <person name="Major J.E."/>
            <person name="Matthews C.D."/>
            <person name="Mauceli E."/>
            <person name="Menzel U."/>
            <person name="Mihalev A.H."/>
            <person name="Minoshima S."/>
            <person name="Murayama Y."/>
            <person name="Naylor J.W."/>
            <person name="Nicol R."/>
            <person name="Nguyen C."/>
            <person name="O'Leary S.B."/>
            <person name="O'Neill K."/>
            <person name="Parker S.C.J."/>
            <person name="Polley A."/>
            <person name="Raymond C.K."/>
            <person name="Reichwald K."/>
            <person name="Rodriguez J."/>
            <person name="Sasaki T."/>
            <person name="Schilhabel M."/>
            <person name="Siddiqui R."/>
            <person name="Smith C.L."/>
            <person name="Sneddon T.P."/>
            <person name="Talamas J.A."/>
            <person name="Tenzin P."/>
            <person name="Topham K."/>
            <person name="Venkataraman V."/>
            <person name="Wen G."/>
            <person name="Yamazaki S."/>
            <person name="Young S.K."/>
            <person name="Zeng Q."/>
            <person name="Zimmer A.R."/>
            <person name="Rosenthal A."/>
            <person name="Birren B.W."/>
            <person name="Platzer M."/>
            <person name="Shimizu N."/>
            <person name="Lander E.S."/>
        </authorList>
    </citation>
    <scope>NUCLEOTIDE SEQUENCE [LARGE SCALE GENOMIC DNA]</scope>
</reference>
<reference key="2">
    <citation type="journal article" date="2004" name="Genome Res.">
        <title>The status, quality, and expansion of the NIH full-length cDNA project: the Mammalian Gene Collection (MGC).</title>
        <authorList>
            <consortium name="The MGC Project Team"/>
        </authorList>
    </citation>
    <scope>NUCLEOTIDE SEQUENCE [LARGE SCALE MRNA] (ISOFORM 1)</scope>
    <source>
        <tissue>Lung</tissue>
        <tissue>Testis</tissue>
    </source>
</reference>
<reference key="3">
    <citation type="journal article" date="2007" name="BMC Genomics">
        <title>The full-ORF clone resource of the German cDNA consortium.</title>
        <authorList>
            <person name="Bechtel S."/>
            <person name="Rosenfelder H."/>
            <person name="Duda A."/>
            <person name="Schmidt C.P."/>
            <person name="Ernst U."/>
            <person name="Wellenreuther R."/>
            <person name="Mehrle A."/>
            <person name="Schuster C."/>
            <person name="Bahr A."/>
            <person name="Bloecker H."/>
            <person name="Heubner D."/>
            <person name="Hoerlein A."/>
            <person name="Michel G."/>
            <person name="Wedler H."/>
            <person name="Koehrer K."/>
            <person name="Ottenwaelder B."/>
            <person name="Poustka A."/>
            <person name="Wiemann S."/>
            <person name="Schupp I."/>
        </authorList>
    </citation>
    <scope>NUCLEOTIDE SEQUENCE [LARGE SCALE MRNA] OF 11-333 (ISOFORM 2)</scope>
    <source>
        <tissue>Liver</tissue>
    </source>
</reference>
<reference key="4">
    <citation type="journal article" date="1994" name="DNA Res.">
        <title>Prediction of the coding sequences of unidentified human genes. I. The coding sequences of 40 new genes (KIAA0001-KIAA0040) deduced by analysis of randomly sampled cDNA clones from human immature myeloid cell line KG-1.</title>
        <authorList>
            <person name="Nomura N."/>
            <person name="Miyajima N."/>
            <person name="Sazuka T."/>
            <person name="Tanaka A."/>
            <person name="Kawarabayasi Y."/>
            <person name="Sato S."/>
            <person name="Nagase T."/>
            <person name="Seki N."/>
            <person name="Ishikawa K."/>
            <person name="Tabata S."/>
        </authorList>
    </citation>
    <scope>NUCLEOTIDE SEQUENCE [LARGE SCALE MRNA] OF 15-333 (ISOFORM 1)</scope>
    <source>
        <tissue>Bone marrow</tissue>
    </source>
</reference>
<reference key="5">
    <citation type="submission" date="2004-06" db="EMBL/GenBank/DDBJ databases">
        <title>Cloning of human full open reading frames in Gateway(TM) system entry vector (pDONR201).</title>
        <authorList>
            <person name="Ebert L."/>
            <person name="Schick M."/>
            <person name="Neubert P."/>
            <person name="Schatten R."/>
            <person name="Henze S."/>
            <person name="Korn B."/>
        </authorList>
    </citation>
    <scope>NUCLEOTIDE SEQUENCE [LARGE SCALE MRNA] OF 20-333 (ISOFORM 1)</scope>
</reference>
<reference key="6">
    <citation type="journal article" date="2008" name="Proc. Natl. Acad. Sci. U.S.A.">
        <title>A quantitative atlas of mitotic phosphorylation.</title>
        <authorList>
            <person name="Dephoure N."/>
            <person name="Zhou C."/>
            <person name="Villen J."/>
            <person name="Beausoleil S.A."/>
            <person name="Bakalarski C.E."/>
            <person name="Elledge S.J."/>
            <person name="Gygi S.P."/>
        </authorList>
    </citation>
    <scope>PHOSPHORYLATION [LARGE SCALE ANALYSIS] AT SER-119</scope>
    <scope>IDENTIFICATION BY MASS SPECTROMETRY [LARGE SCALE ANALYSIS]</scope>
    <source>
        <tissue>Cervix carcinoma</tissue>
    </source>
</reference>
<reference key="7">
    <citation type="journal article" date="2010" name="Sci. Signal.">
        <title>Quantitative phosphoproteomics reveals widespread full phosphorylation site occupancy during mitosis.</title>
        <authorList>
            <person name="Olsen J.V."/>
            <person name="Vermeulen M."/>
            <person name="Santamaria A."/>
            <person name="Kumar C."/>
            <person name="Miller M.L."/>
            <person name="Jensen L.J."/>
            <person name="Gnad F."/>
            <person name="Cox J."/>
            <person name="Jensen T.S."/>
            <person name="Nigg E.A."/>
            <person name="Brunak S."/>
            <person name="Mann M."/>
        </authorList>
    </citation>
    <scope>PHOSPHORYLATION [LARGE SCALE ANALYSIS] AT SER-119</scope>
    <scope>IDENTIFICATION BY MASS SPECTROMETRY [LARGE SCALE ANALYSIS]</scope>
    <source>
        <tissue>Cervix carcinoma</tissue>
    </source>
</reference>
<reference key="8">
    <citation type="journal article" date="2013" name="J. Proteome Res.">
        <title>Toward a comprehensive characterization of a human cancer cell phosphoproteome.</title>
        <authorList>
            <person name="Zhou H."/>
            <person name="Di Palma S."/>
            <person name="Preisinger C."/>
            <person name="Peng M."/>
            <person name="Polat A.N."/>
            <person name="Heck A.J."/>
            <person name="Mohammed S."/>
        </authorList>
    </citation>
    <scope>PHOSPHORYLATION [LARGE SCALE ANALYSIS] AT SER-119</scope>
    <scope>IDENTIFICATION BY MASS SPECTROMETRY [LARGE SCALE ANALYSIS]</scope>
    <source>
        <tissue>Cervix carcinoma</tissue>
        <tissue>Erythroleukemia</tissue>
    </source>
</reference>
<reference key="9">
    <citation type="journal article" date="2014" name="J. Proteomics">
        <title>An enzyme assisted RP-RPLC approach for in-depth analysis of human liver phosphoproteome.</title>
        <authorList>
            <person name="Bian Y."/>
            <person name="Song C."/>
            <person name="Cheng K."/>
            <person name="Dong M."/>
            <person name="Wang F."/>
            <person name="Huang J."/>
            <person name="Sun D."/>
            <person name="Wang L."/>
            <person name="Ye M."/>
            <person name="Zou H."/>
        </authorList>
    </citation>
    <scope>PHOSPHORYLATION [LARGE SCALE ANALYSIS] AT SER-119</scope>
    <scope>IDENTIFICATION BY MASS SPECTROMETRY [LARGE SCALE ANALYSIS]</scope>
    <source>
        <tissue>Liver</tissue>
    </source>
</reference>
<gene>
    <name type="primary">MTFR1</name>
    <name type="synonym">CHPPR</name>
    <name type="synonym">FAM54A2</name>
    <name type="synonym">KIAA0009</name>
</gene>
<evidence type="ECO:0000250" key="1"/>
<evidence type="ECO:0000255" key="2"/>
<evidence type="ECO:0000256" key="3">
    <source>
        <dbReference type="SAM" id="MobiDB-lite"/>
    </source>
</evidence>
<evidence type="ECO:0000303" key="4">
    <source>
    </source>
</evidence>
<evidence type="ECO:0000305" key="5"/>
<evidence type="ECO:0007744" key="6">
    <source>
    </source>
</evidence>
<evidence type="ECO:0007744" key="7">
    <source>
    </source>
</evidence>
<evidence type="ECO:0007744" key="8">
    <source>
    </source>
</evidence>
<evidence type="ECO:0007744" key="9">
    <source>
    </source>
</evidence>
<name>MTFR1_HUMAN</name>
<dbReference type="EMBL" id="AC055822">
    <property type="status" value="NOT_ANNOTATED_CDS"/>
    <property type="molecule type" value="Genomic_DNA"/>
</dbReference>
<dbReference type="EMBL" id="BC036116">
    <property type="protein sequence ID" value="AAH36116.1"/>
    <property type="molecule type" value="mRNA"/>
</dbReference>
<dbReference type="EMBL" id="BC043498">
    <property type="protein sequence ID" value="AAH43498.1"/>
    <property type="molecule type" value="mRNA"/>
</dbReference>
<dbReference type="EMBL" id="BX537854">
    <property type="protein sequence ID" value="CAD97862.1"/>
    <property type="molecule type" value="mRNA"/>
</dbReference>
<dbReference type="EMBL" id="D13634">
    <property type="protein sequence ID" value="BAA02798.1"/>
    <property type="status" value="ALT_INIT"/>
    <property type="molecule type" value="mRNA"/>
</dbReference>
<dbReference type="EMBL" id="CR456910">
    <property type="protein sequence ID" value="CAG33191.1"/>
    <property type="molecule type" value="mRNA"/>
</dbReference>
<dbReference type="CCDS" id="CCDS55240.1">
    <molecule id="Q15390-2"/>
</dbReference>
<dbReference type="CCDS" id="CCDS6182.1">
    <molecule id="Q15390-1"/>
</dbReference>
<dbReference type="RefSeq" id="NP_001139310.1">
    <molecule id="Q15390-2"/>
    <property type="nucleotide sequence ID" value="NM_001145838.2"/>
</dbReference>
<dbReference type="RefSeq" id="NP_001399997.1">
    <molecule id="Q15390-1"/>
    <property type="nucleotide sequence ID" value="NM_001413068.1"/>
</dbReference>
<dbReference type="RefSeq" id="NP_001399998.1">
    <molecule id="Q15390-1"/>
    <property type="nucleotide sequence ID" value="NM_001413069.1"/>
</dbReference>
<dbReference type="RefSeq" id="NP_001399999.1">
    <molecule id="Q15390-1"/>
    <property type="nucleotide sequence ID" value="NM_001413070.1"/>
</dbReference>
<dbReference type="RefSeq" id="NP_001400000.1">
    <molecule id="Q15390-1"/>
    <property type="nucleotide sequence ID" value="NM_001413071.1"/>
</dbReference>
<dbReference type="RefSeq" id="NP_001400007.1">
    <molecule id="Q15390-1"/>
    <property type="nucleotide sequence ID" value="NM_001413078.1"/>
</dbReference>
<dbReference type="RefSeq" id="NP_001400009.1">
    <molecule id="Q15390-1"/>
    <property type="nucleotide sequence ID" value="NM_001413080.1"/>
</dbReference>
<dbReference type="RefSeq" id="NP_001400010.1">
    <molecule id="Q15390-1"/>
    <property type="nucleotide sequence ID" value="NM_001413081.1"/>
</dbReference>
<dbReference type="RefSeq" id="NP_001400011.1">
    <molecule id="Q15390-1"/>
    <property type="nucleotide sequence ID" value="NM_001413082.1"/>
</dbReference>
<dbReference type="RefSeq" id="NP_055452.3">
    <molecule id="Q15390-1"/>
    <property type="nucleotide sequence ID" value="NM_014637.3"/>
</dbReference>
<dbReference type="RefSeq" id="XP_047278422.1">
    <molecule id="Q15390-1"/>
    <property type="nucleotide sequence ID" value="XM_047422466.1"/>
</dbReference>
<dbReference type="RefSeq" id="XP_054217537.1">
    <molecule id="Q15390-1"/>
    <property type="nucleotide sequence ID" value="XM_054361562.1"/>
</dbReference>
<dbReference type="SMR" id="Q15390"/>
<dbReference type="BioGRID" id="115008">
    <property type="interactions" value="76"/>
</dbReference>
<dbReference type="FunCoup" id="Q15390">
    <property type="interactions" value="1243"/>
</dbReference>
<dbReference type="IntAct" id="Q15390">
    <property type="interactions" value="43"/>
</dbReference>
<dbReference type="MINT" id="Q15390"/>
<dbReference type="STRING" id="9606.ENSP00000262146"/>
<dbReference type="GlyGen" id="Q15390">
    <property type="glycosylation" value="1 site, 1 O-linked glycan (1 site)"/>
</dbReference>
<dbReference type="iPTMnet" id="Q15390"/>
<dbReference type="PhosphoSitePlus" id="Q15390"/>
<dbReference type="BioMuta" id="MTFR1"/>
<dbReference type="DMDM" id="73920234"/>
<dbReference type="jPOST" id="Q15390"/>
<dbReference type="MassIVE" id="Q15390"/>
<dbReference type="PaxDb" id="9606-ENSP00000262146"/>
<dbReference type="PeptideAtlas" id="Q15390"/>
<dbReference type="ProteomicsDB" id="17303"/>
<dbReference type="ProteomicsDB" id="60560">
    <molecule id="Q15390-1"/>
</dbReference>
<dbReference type="Pumba" id="Q15390"/>
<dbReference type="Antibodypedia" id="11925">
    <property type="antibodies" value="119 antibodies from 23 providers"/>
</dbReference>
<dbReference type="DNASU" id="9650"/>
<dbReference type="Ensembl" id="ENST00000262146.9">
    <molecule id="Q15390-1"/>
    <property type="protein sequence ID" value="ENSP00000262146.4"/>
    <property type="gene ID" value="ENSG00000066855.16"/>
</dbReference>
<dbReference type="Ensembl" id="ENST00000458689.2">
    <molecule id="Q15390-2"/>
    <property type="protein sequence ID" value="ENSP00000391502.2"/>
    <property type="gene ID" value="ENSG00000066855.16"/>
</dbReference>
<dbReference type="GeneID" id="9650"/>
<dbReference type="KEGG" id="hsa:9650"/>
<dbReference type="MANE-Select" id="ENST00000262146.9">
    <property type="protein sequence ID" value="ENSP00000262146.4"/>
    <property type="RefSeq nucleotide sequence ID" value="NM_014637.4"/>
    <property type="RefSeq protein sequence ID" value="NP_055452.3"/>
</dbReference>
<dbReference type="UCSC" id="uc003xvm.3">
    <molecule id="Q15390-1"/>
    <property type="organism name" value="human"/>
</dbReference>
<dbReference type="AGR" id="HGNC:29510"/>
<dbReference type="CTD" id="9650"/>
<dbReference type="DisGeNET" id="9650"/>
<dbReference type="GeneCards" id="MTFR1"/>
<dbReference type="HGNC" id="HGNC:29510">
    <property type="gene designation" value="MTFR1"/>
</dbReference>
<dbReference type="HPA" id="ENSG00000066855">
    <property type="expression patterns" value="Low tissue specificity"/>
</dbReference>
<dbReference type="MIM" id="619414">
    <property type="type" value="gene"/>
</dbReference>
<dbReference type="neXtProt" id="NX_Q15390"/>
<dbReference type="OpenTargets" id="ENSG00000066855"/>
<dbReference type="PharmGKB" id="PA142671305"/>
<dbReference type="VEuPathDB" id="HostDB:ENSG00000066855"/>
<dbReference type="eggNOG" id="ENOG502QSSN">
    <property type="taxonomic scope" value="Eukaryota"/>
</dbReference>
<dbReference type="GeneTree" id="ENSGT00950000183215"/>
<dbReference type="HOGENOM" id="CLU_059135_0_0_1"/>
<dbReference type="InParanoid" id="Q15390"/>
<dbReference type="OMA" id="CPRIHFQ"/>
<dbReference type="OrthoDB" id="2133332at2759"/>
<dbReference type="PAN-GO" id="Q15390">
    <property type="GO annotations" value="3 GO annotations based on evolutionary models"/>
</dbReference>
<dbReference type="PhylomeDB" id="Q15390"/>
<dbReference type="TreeFam" id="TF331404"/>
<dbReference type="PathwayCommons" id="Q15390"/>
<dbReference type="SignaLink" id="Q15390"/>
<dbReference type="BioGRID-ORCS" id="9650">
    <property type="hits" value="14 hits in 1123 CRISPR screens"/>
</dbReference>
<dbReference type="ChiTaRS" id="MTFR1">
    <property type="organism name" value="human"/>
</dbReference>
<dbReference type="GenomeRNAi" id="9650"/>
<dbReference type="Pharos" id="Q15390">
    <property type="development level" value="Tbio"/>
</dbReference>
<dbReference type="PRO" id="PR:Q15390"/>
<dbReference type="Proteomes" id="UP000005640">
    <property type="component" value="Chromosome 8"/>
</dbReference>
<dbReference type="RNAct" id="Q15390">
    <property type="molecule type" value="protein"/>
</dbReference>
<dbReference type="Bgee" id="ENSG00000066855">
    <property type="expression patterns" value="Expressed in secondary oocyte and 204 other cell types or tissues"/>
</dbReference>
<dbReference type="ExpressionAtlas" id="Q15390">
    <property type="expression patterns" value="baseline and differential"/>
</dbReference>
<dbReference type="GO" id="GO:0005829">
    <property type="term" value="C:cytosol"/>
    <property type="evidence" value="ECO:0000314"/>
    <property type="project" value="HPA"/>
</dbReference>
<dbReference type="GO" id="GO:0005739">
    <property type="term" value="C:mitochondrion"/>
    <property type="evidence" value="ECO:0000314"/>
    <property type="project" value="HPA"/>
</dbReference>
<dbReference type="GO" id="GO:0005886">
    <property type="term" value="C:plasma membrane"/>
    <property type="evidence" value="ECO:0000314"/>
    <property type="project" value="UniProtKB"/>
</dbReference>
<dbReference type="GO" id="GO:0009060">
    <property type="term" value="P:aerobic respiration"/>
    <property type="evidence" value="ECO:0000250"/>
    <property type="project" value="UniProtKB"/>
</dbReference>
<dbReference type="GO" id="GO:0000266">
    <property type="term" value="P:mitochondrial fission"/>
    <property type="evidence" value="ECO:0000250"/>
    <property type="project" value="UniProtKB"/>
</dbReference>
<dbReference type="GO" id="GO:0007005">
    <property type="term" value="P:mitochondrion organization"/>
    <property type="evidence" value="ECO:0000250"/>
    <property type="project" value="UniProtKB"/>
</dbReference>
<dbReference type="InterPro" id="IPR007972">
    <property type="entry name" value="Mtfr1"/>
</dbReference>
<dbReference type="PANTHER" id="PTHR14215:SF1">
    <property type="entry name" value="MITOCHONDRIAL FISSION REGULATOR 1"/>
    <property type="match status" value="1"/>
</dbReference>
<dbReference type="PANTHER" id="PTHR14215">
    <property type="entry name" value="PROTEIN OF UNKNOWN FUNCTION DUF729"/>
    <property type="match status" value="1"/>
</dbReference>
<dbReference type="Pfam" id="PF05308">
    <property type="entry name" value="Mito_fiss_reg"/>
    <property type="match status" value="1"/>
</dbReference>
<feature type="transit peptide" description="Mitochondrion" evidence="2">
    <location>
        <begin position="1"/>
        <end position="48"/>
    </location>
</feature>
<feature type="chain" id="PRO_0000096622" description="Mitochondrial fission regulator 1">
    <location>
        <begin position="49"/>
        <end position="333"/>
    </location>
</feature>
<feature type="region of interest" description="Disordered" evidence="3">
    <location>
        <begin position="177"/>
        <end position="198"/>
    </location>
</feature>
<feature type="region of interest" description="Necessary and sufficient to promote mitochondrial fission" evidence="1">
    <location>
        <begin position="179"/>
        <end position="304"/>
    </location>
</feature>
<feature type="region of interest" description="Disordered" evidence="3">
    <location>
        <begin position="288"/>
        <end position="315"/>
    </location>
</feature>
<feature type="coiled-coil region" evidence="2">
    <location>
        <begin position="137"/>
        <end position="169"/>
    </location>
</feature>
<feature type="compositionally biased region" description="Pro residues" evidence="3">
    <location>
        <begin position="184"/>
        <end position="198"/>
    </location>
</feature>
<feature type="compositionally biased region" description="Basic and acidic residues" evidence="3">
    <location>
        <begin position="288"/>
        <end position="307"/>
    </location>
</feature>
<feature type="modified residue" description="Phosphoserine" evidence="6 7 8 9">
    <location>
        <position position="119"/>
    </location>
</feature>
<feature type="splice variant" id="VSP_046765" description="In isoform 2." evidence="4">
    <location>
        <begin position="23"/>
        <end position="55"/>
    </location>
</feature>
<feature type="sequence conflict" description="In Ref. 1; AAH36116." evidence="5" ref="1">
    <original>L</original>
    <variation>R</variation>
    <location>
        <position position="135"/>
    </location>
</feature>
<keyword id="KW-0025">Alternative splicing</keyword>
<keyword id="KW-0175">Coiled coil</keyword>
<keyword id="KW-0496">Mitochondrion</keyword>
<keyword id="KW-0597">Phosphoprotein</keyword>
<keyword id="KW-1267">Proteomics identification</keyword>
<keyword id="KW-1185">Reference proteome</keyword>
<keyword id="KW-0809">Transit peptide</keyword>
<protein>
    <recommendedName>
        <fullName>Mitochondrial fission regulator 1</fullName>
    </recommendedName>
    <alternativeName>
        <fullName>Chondrocyte protein with a poly-proline region</fullName>
    </alternativeName>
</protein>
<comment type="function">
    <text evidence="1">May play a role in mitochondrial aerobic respiration. May also regulate mitochondrial organization and fission (By similarity).</text>
</comment>
<comment type="interaction">
    <interactant intactId="EBI-724207">
        <id>Q15390</id>
    </interactant>
    <interactant intactId="EBI-517508">
        <id>Q9NR28</id>
        <label>DIABLO</label>
    </interactant>
    <organismsDiffer>false</organismsDiffer>
    <experiments>5</experiments>
</comment>
<comment type="interaction">
    <interactant intactId="EBI-724207">
        <id>Q15390</id>
    </interactant>
    <interactant intactId="EBI-10238936">
        <id>Q17RD7</id>
        <label>SYT16</label>
    </interactant>
    <organismsDiffer>false</organismsDiffer>
    <experiments>3</experiments>
</comment>
<comment type="subcellular location">
    <subcellularLocation>
        <location evidence="1">Mitochondrion</location>
    </subcellularLocation>
    <text evidence="1">May be associated with the inner and the outer mitochondrial membrane.</text>
</comment>
<comment type="alternative products">
    <event type="alternative splicing"/>
    <isoform>
        <id>Q15390-1</id>
        <name>1</name>
        <sequence type="displayed"/>
    </isoform>
    <isoform>
        <id>Q15390-2</id>
        <name>2</name>
        <sequence type="described" ref="VSP_046765"/>
    </isoform>
</comment>
<comment type="similarity">
    <text evidence="5">Belongs to the MTFR1 family.</text>
</comment>
<comment type="sequence caution" evidence="5">
    <conflict type="erroneous initiation">
        <sequence resource="EMBL-CDS" id="BAA02798"/>
    </conflict>
    <text>Truncated N-terminus.</text>
</comment>
<accession>Q15390</accession>
<accession>E7EP84</accession>
<accession>Q6IB94</accession>
<accession>Q7Z669</accession>
<accession>Q86XH5</accession>
<accession>Q8IVD7</accession>